<name>LEC_NARTA</name>
<protein>
    <recommendedName>
        <fullName evidence="7">Mannose-specific lectin</fullName>
    </recommendedName>
    <alternativeName>
        <fullName evidence="7">Agglutinin</fullName>
    </alternativeName>
    <alternativeName>
        <fullName evidence="5">NTL-125</fullName>
    </alternativeName>
</protein>
<reference evidence="6" key="1">
    <citation type="journal article" date="2022" name="Virus Res.">
        <title>A novel plant lectin, NTL-125, interferes with SARS-CoV-2 interaction with hACE2.</title>
        <authorList>
            <person name="Sarkar A."/>
            <person name="Paul S."/>
            <person name="Singh C."/>
            <person name="Chowdhury N."/>
            <person name="Nag P."/>
            <person name="Das S."/>
            <person name="Kumar S."/>
            <person name="Sharma A."/>
            <person name="Das D.K."/>
            <person name="Dutta D."/>
            <person name="Thakur K.G."/>
            <person name="Bagchi A."/>
            <person name="Shriti S."/>
            <person name="Das K.P."/>
            <person name="Ringe R.P."/>
            <person name="Das S."/>
        </authorList>
    </citation>
    <scope>IDENTIFICATION BY MASS SPECTROMETRY</scope>
    <scope>FUNCTION</scope>
    <scope>TISSUE SPECIFICITY</scope>
    <source>
        <tissue evidence="4">Bulb</tissue>
    </source>
</reference>
<comment type="function">
    <text evidence="1 4">Mannose-specific lectin (By similarity). Displays antiviral activity and therefore may contribute to defense against infections (PubMed:35398454). Shows agglutinating activity towards rabbit erythrocytes (PubMed:35398454).</text>
</comment>
<comment type="subunit">
    <text evidence="1">Homotetramer; antiparallel.</text>
</comment>
<comment type="subcellular location">
    <subcellularLocation>
        <location evidence="2">Secreted</location>
    </subcellularLocation>
</comment>
<comment type="tissue specificity">
    <text evidence="4">Detected in bulbs (at protein level).</text>
</comment>
<comment type="miscellaneous">
    <text evidence="4">Has a significant inhibitory effect on SARS-CoV-2 in Vero E6 cells (IC(50)=0.8 ug/ml) (PubMed:35398454). Viral replication is fully inhibited at concentrations from 20 ug/ml to 5 ug/ml, and 50% inhibition occurs at about 0.4 ug/ml (PubMed:35398454).</text>
</comment>
<feature type="chain" id="PRO_0000456717" description="Mannose-specific lectin">
    <location>
        <begin position="1"/>
        <end position="139"/>
    </location>
</feature>
<feature type="domain" description="Bulb-type lectin" evidence="3">
    <location>
        <begin position="1"/>
        <end position="109"/>
    </location>
</feature>
<feature type="binding site" evidence="1">
    <location>
        <position position="26"/>
    </location>
    <ligand>
        <name>alpha-D-mannopyranose</name>
        <dbReference type="ChEBI" id="CHEBI:28729"/>
    </ligand>
</feature>
<feature type="binding site" evidence="1">
    <location>
        <position position="28"/>
    </location>
    <ligand>
        <name>alpha-D-mannopyranose</name>
        <dbReference type="ChEBI" id="CHEBI:28729"/>
    </ligand>
</feature>
<feature type="binding site" evidence="1">
    <location>
        <position position="30"/>
    </location>
    <ligand>
        <name>alpha-D-mannopyranose</name>
        <dbReference type="ChEBI" id="CHEBI:28729"/>
    </ligand>
</feature>
<feature type="binding site" evidence="1">
    <location>
        <position position="34"/>
    </location>
    <ligand>
        <name>alpha-D-mannopyranose</name>
        <dbReference type="ChEBI" id="CHEBI:28729"/>
    </ligand>
</feature>
<feature type="binding site" evidence="1">
    <location>
        <position position="37"/>
    </location>
    <ligand>
        <name>alpha-D-mannopyranose</name>
        <dbReference type="ChEBI" id="CHEBI:28729"/>
    </ligand>
</feature>
<feature type="binding site" evidence="1">
    <location>
        <position position="38"/>
    </location>
    <ligand>
        <name>alpha-D-mannopyranose</name>
        <dbReference type="ChEBI" id="CHEBI:28729"/>
    </ligand>
</feature>
<feature type="binding site" evidence="1">
    <location>
        <position position="41"/>
    </location>
    <ligand>
        <name>alpha-D-mannopyranose</name>
        <dbReference type="ChEBI" id="CHEBI:28729"/>
    </ligand>
</feature>
<feature type="binding site" evidence="1">
    <location>
        <position position="42"/>
    </location>
    <ligand>
        <name>alpha-D-mannopyranose</name>
        <dbReference type="ChEBI" id="CHEBI:28729"/>
    </ligand>
</feature>
<feature type="binding site" evidence="1">
    <location>
        <position position="44"/>
    </location>
    <ligand>
        <name>alpha-D-mannopyranose</name>
        <dbReference type="ChEBI" id="CHEBI:28729"/>
    </ligand>
</feature>
<feature type="binding site" evidence="1">
    <location>
        <position position="57"/>
    </location>
    <ligand>
        <name>alpha-D-mannopyranose</name>
        <dbReference type="ChEBI" id="CHEBI:28729"/>
    </ligand>
</feature>
<feature type="binding site" evidence="1">
    <location>
        <position position="59"/>
    </location>
    <ligand>
        <name>alpha-D-mannopyranose</name>
        <dbReference type="ChEBI" id="CHEBI:28729"/>
    </ligand>
</feature>
<feature type="binding site" evidence="1">
    <location>
        <position position="61"/>
    </location>
    <ligand>
        <name>alpha-D-mannopyranose</name>
        <dbReference type="ChEBI" id="CHEBI:28729"/>
    </ligand>
</feature>
<feature type="binding site" evidence="1">
    <location>
        <position position="65"/>
    </location>
    <ligand>
        <name>alpha-D-mannopyranose</name>
        <dbReference type="ChEBI" id="CHEBI:28729"/>
    </ligand>
</feature>
<feature type="binding site" evidence="1">
    <location>
        <position position="72"/>
    </location>
    <ligand>
        <name>alpha-D-mannopyranose</name>
        <dbReference type="ChEBI" id="CHEBI:28729"/>
    </ligand>
</feature>
<feature type="binding site" evidence="1">
    <location>
        <position position="73"/>
    </location>
    <ligand>
        <name>alpha-D-mannopyranose</name>
        <dbReference type="ChEBI" id="CHEBI:28729"/>
    </ligand>
</feature>
<feature type="binding site" evidence="1">
    <location>
        <position position="76"/>
    </location>
    <ligand>
        <name>alpha-D-mannopyranose</name>
        <dbReference type="ChEBI" id="CHEBI:28729"/>
    </ligand>
</feature>
<feature type="binding site" evidence="1">
    <location>
        <position position="83"/>
    </location>
    <ligand>
        <name>alpha-D-mannopyranose</name>
        <dbReference type="ChEBI" id="CHEBI:28729"/>
    </ligand>
</feature>
<feature type="binding site" evidence="1">
    <location>
        <position position="89"/>
    </location>
    <ligand>
        <name>alpha-D-mannopyranose</name>
        <dbReference type="ChEBI" id="CHEBI:28729"/>
    </ligand>
</feature>
<feature type="binding site" evidence="1">
    <location>
        <position position="91"/>
    </location>
    <ligand>
        <name>alpha-D-mannopyranose</name>
        <dbReference type="ChEBI" id="CHEBI:28729"/>
    </ligand>
</feature>
<feature type="binding site" evidence="1">
    <location>
        <position position="93"/>
    </location>
    <ligand>
        <name>alpha-D-mannopyranose</name>
        <dbReference type="ChEBI" id="CHEBI:28729"/>
    </ligand>
</feature>
<feature type="binding site" evidence="1">
    <location>
        <position position="97"/>
    </location>
    <ligand>
        <name>alpha-D-mannopyranose</name>
        <dbReference type="ChEBI" id="CHEBI:28729"/>
    </ligand>
</feature>
<feature type="binding site" evidence="1">
    <location>
        <position position="102"/>
    </location>
    <ligand>
        <name>alpha-D-mannopyranose</name>
        <dbReference type="ChEBI" id="CHEBI:28729"/>
    </ligand>
</feature>
<feature type="disulfide bond" evidence="3">
    <location>
        <begin position="29"/>
        <end position="52"/>
    </location>
</feature>
<organism evidence="5">
    <name type="scientific">Narcissus tazetta</name>
    <name type="common">Cream narcissus</name>
    <dbReference type="NCBI Taxonomy" id="54860"/>
    <lineage>
        <taxon>Eukaryota</taxon>
        <taxon>Viridiplantae</taxon>
        <taxon>Streptophyta</taxon>
        <taxon>Embryophyta</taxon>
        <taxon>Tracheophyta</taxon>
        <taxon>Spermatophyta</taxon>
        <taxon>Magnoliopsida</taxon>
        <taxon>Liliopsida</taxon>
        <taxon>Asparagales</taxon>
        <taxon>Amaryllidaceae</taxon>
        <taxon>Amaryllidoideae</taxon>
        <taxon>Narcissus</taxon>
    </lineage>
</organism>
<sequence length="139" mass="15313">DNILYSGETLSPGEFLNNGRYVFIMQEDCNLVLYDLDKPIWATNTGGLDRRCHLSMQSDGNLVVYSPRNNPIWASNTGGENGNYVCVLQKDRNVVIYGTARWATGTNIHGAGIVGVPGSAPQNSTAEMMKLVRKYLITK</sequence>
<evidence type="ECO:0000250" key="1">
    <source>
        <dbReference type="UniProtKB" id="C0HM45"/>
    </source>
</evidence>
<evidence type="ECO:0000250" key="2">
    <source>
        <dbReference type="UniProtKB" id="P49329"/>
    </source>
</evidence>
<evidence type="ECO:0000255" key="3">
    <source>
        <dbReference type="PROSITE-ProRule" id="PRU00038"/>
    </source>
</evidence>
<evidence type="ECO:0000269" key="4">
    <source>
    </source>
</evidence>
<evidence type="ECO:0000303" key="5">
    <source>
    </source>
</evidence>
<evidence type="ECO:0000305" key="6"/>
<evidence type="ECO:0000305" key="7">
    <source>
    </source>
</evidence>
<proteinExistence type="evidence at protein level"/>
<dbReference type="SMR" id="C0HLU1"/>
<dbReference type="GO" id="GO:0005576">
    <property type="term" value="C:extracellular region"/>
    <property type="evidence" value="ECO:0007669"/>
    <property type="project" value="UniProtKB-SubCell"/>
</dbReference>
<dbReference type="GO" id="GO:0005537">
    <property type="term" value="F:D-mannose binding"/>
    <property type="evidence" value="ECO:0007669"/>
    <property type="project" value="UniProtKB-KW"/>
</dbReference>
<dbReference type="GO" id="GO:0051607">
    <property type="term" value="P:defense response to virus"/>
    <property type="evidence" value="ECO:0000314"/>
    <property type="project" value="UniProtKB"/>
</dbReference>
<dbReference type="GO" id="GO:0050688">
    <property type="term" value="P:regulation of defense response to virus"/>
    <property type="evidence" value="ECO:0007669"/>
    <property type="project" value="UniProtKB-KW"/>
</dbReference>
<dbReference type="CDD" id="cd00028">
    <property type="entry name" value="B_lectin"/>
    <property type="match status" value="1"/>
</dbReference>
<dbReference type="Gene3D" id="2.90.10.10">
    <property type="entry name" value="Bulb-type lectin domain"/>
    <property type="match status" value="1"/>
</dbReference>
<dbReference type="InterPro" id="IPR001480">
    <property type="entry name" value="Bulb-type_lectin_dom"/>
</dbReference>
<dbReference type="InterPro" id="IPR036426">
    <property type="entry name" value="Bulb-type_lectin_dom_sf"/>
</dbReference>
<dbReference type="SMART" id="SM00108">
    <property type="entry name" value="B_lectin"/>
    <property type="match status" value="1"/>
</dbReference>
<dbReference type="SUPFAM" id="SSF51110">
    <property type="entry name" value="alpha-D-mannose-specific plant lectins"/>
    <property type="match status" value="1"/>
</dbReference>
<dbReference type="PROSITE" id="PS50927">
    <property type="entry name" value="BULB_LECTIN"/>
    <property type="match status" value="1"/>
</dbReference>
<keyword id="KW-0930">Antiviral protein</keyword>
<keyword id="KW-1015">Disulfide bond</keyword>
<keyword id="KW-0430">Lectin</keyword>
<keyword id="KW-0465">Mannose-binding</keyword>
<keyword id="KW-0611">Plant defense</keyword>
<keyword id="KW-0964">Secreted</keyword>
<accession>C0HLU1</accession>